<reference key="1">
    <citation type="journal article" date="1998" name="Biochem. Biophys. Res. Commun.">
        <title>ZK1, a novel Kruppel-type zinc finger gene, is induced following exposure to ionizing radiation and enhances apoptotic cell death on hematopoietic cells.</title>
        <authorList>
            <person name="Katoh O."/>
            <person name="Oguri T."/>
            <person name="Takahashi T."/>
            <person name="Takai S."/>
            <person name="Fujiwara Y."/>
            <person name="Watanabe H."/>
        </authorList>
    </citation>
    <scope>NUCLEOTIDE SEQUENCE [MRNA]</scope>
    <scope>VARIANT PHE-485</scope>
</reference>
<reference key="2">
    <citation type="journal article" date="2004" name="Nature">
        <title>The DNA sequence and biology of human chromosome 19.</title>
        <authorList>
            <person name="Grimwood J."/>
            <person name="Gordon L.A."/>
            <person name="Olsen A.S."/>
            <person name="Terry A."/>
            <person name="Schmutz J."/>
            <person name="Lamerdin J.E."/>
            <person name="Hellsten U."/>
            <person name="Goodstein D."/>
            <person name="Couronne O."/>
            <person name="Tran-Gyamfi M."/>
            <person name="Aerts A."/>
            <person name="Altherr M."/>
            <person name="Ashworth L."/>
            <person name="Bajorek E."/>
            <person name="Black S."/>
            <person name="Branscomb E."/>
            <person name="Caenepeel S."/>
            <person name="Carrano A.V."/>
            <person name="Caoile C."/>
            <person name="Chan Y.M."/>
            <person name="Christensen M."/>
            <person name="Cleland C.A."/>
            <person name="Copeland A."/>
            <person name="Dalin E."/>
            <person name="Dehal P."/>
            <person name="Denys M."/>
            <person name="Detter J.C."/>
            <person name="Escobar J."/>
            <person name="Flowers D."/>
            <person name="Fotopulos D."/>
            <person name="Garcia C."/>
            <person name="Georgescu A.M."/>
            <person name="Glavina T."/>
            <person name="Gomez M."/>
            <person name="Gonzales E."/>
            <person name="Groza M."/>
            <person name="Hammon N."/>
            <person name="Hawkins T."/>
            <person name="Haydu L."/>
            <person name="Ho I."/>
            <person name="Huang W."/>
            <person name="Israni S."/>
            <person name="Jett J."/>
            <person name="Kadner K."/>
            <person name="Kimball H."/>
            <person name="Kobayashi A."/>
            <person name="Larionov V."/>
            <person name="Leem S.-H."/>
            <person name="Lopez F."/>
            <person name="Lou Y."/>
            <person name="Lowry S."/>
            <person name="Malfatti S."/>
            <person name="Martinez D."/>
            <person name="McCready P.M."/>
            <person name="Medina C."/>
            <person name="Morgan J."/>
            <person name="Nelson K."/>
            <person name="Nolan M."/>
            <person name="Ovcharenko I."/>
            <person name="Pitluck S."/>
            <person name="Pollard M."/>
            <person name="Popkie A.P."/>
            <person name="Predki P."/>
            <person name="Quan G."/>
            <person name="Ramirez L."/>
            <person name="Rash S."/>
            <person name="Retterer J."/>
            <person name="Rodriguez A."/>
            <person name="Rogers S."/>
            <person name="Salamov A."/>
            <person name="Salazar A."/>
            <person name="She X."/>
            <person name="Smith D."/>
            <person name="Slezak T."/>
            <person name="Solovyev V."/>
            <person name="Thayer N."/>
            <person name="Tice H."/>
            <person name="Tsai M."/>
            <person name="Ustaszewska A."/>
            <person name="Vo N."/>
            <person name="Wagner M."/>
            <person name="Wheeler J."/>
            <person name="Wu K."/>
            <person name="Xie G."/>
            <person name="Yang J."/>
            <person name="Dubchak I."/>
            <person name="Furey T.S."/>
            <person name="DeJong P."/>
            <person name="Dickson M."/>
            <person name="Gordon D."/>
            <person name="Eichler E.E."/>
            <person name="Pennacchio L.A."/>
            <person name="Richardson P."/>
            <person name="Stubbs L."/>
            <person name="Rokhsar D.S."/>
            <person name="Myers R.M."/>
            <person name="Rubin E.M."/>
            <person name="Lucas S.M."/>
        </authorList>
    </citation>
    <scope>NUCLEOTIDE SEQUENCE [LARGE SCALE GENOMIC DNA]</scope>
</reference>
<reference key="3">
    <citation type="journal article" date="2004" name="Genome Res.">
        <title>The status, quality, and expansion of the NIH full-length cDNA project: the Mammalian Gene Collection (MGC).</title>
        <authorList>
            <consortium name="The MGC Project Team"/>
        </authorList>
    </citation>
    <scope>NUCLEOTIDE SEQUENCE [LARGE SCALE MRNA]</scope>
    <scope>VARIANT PHE-485</scope>
    <source>
        <tissue>Testis</tissue>
    </source>
</reference>
<name>ZN443_HUMAN</name>
<keyword id="KW-0238">DNA-binding</keyword>
<keyword id="KW-0479">Metal-binding</keyword>
<keyword id="KW-0539">Nucleus</keyword>
<keyword id="KW-1267">Proteomics identification</keyword>
<keyword id="KW-1185">Reference proteome</keyword>
<keyword id="KW-0677">Repeat</keyword>
<keyword id="KW-0804">Transcription</keyword>
<keyword id="KW-0805">Transcription regulation</keyword>
<keyword id="KW-0862">Zinc</keyword>
<keyword id="KW-0863">Zinc-finger</keyword>
<evidence type="ECO:0000255" key="1">
    <source>
        <dbReference type="PROSITE-ProRule" id="PRU00042"/>
    </source>
</evidence>
<evidence type="ECO:0000255" key="2">
    <source>
        <dbReference type="PROSITE-ProRule" id="PRU00119"/>
    </source>
</evidence>
<evidence type="ECO:0000269" key="3">
    <source>
    </source>
</evidence>
<evidence type="ECO:0000269" key="4">
    <source>
    </source>
</evidence>
<evidence type="ECO:0000305" key="5"/>
<protein>
    <recommendedName>
        <fullName>Zinc finger protein 443</fullName>
    </recommendedName>
    <alternativeName>
        <fullName>Krueppel-type zinc finger protein ZK1</fullName>
    </alternativeName>
</protein>
<accession>Q9Y2A4</accession>
<feature type="chain" id="PRO_0000047592" description="Zinc finger protein 443">
    <location>
        <begin position="1"/>
        <end position="671"/>
    </location>
</feature>
<feature type="domain" description="KRAB" evidence="2">
    <location>
        <begin position="4"/>
        <end position="86"/>
    </location>
</feature>
<feature type="zinc finger region" description="C2H2-type 1; degenerate" evidence="1">
    <location>
        <begin position="134"/>
        <end position="159"/>
    </location>
</feature>
<feature type="zinc finger region" description="C2H2-type 2; degenerate" evidence="1">
    <location>
        <begin position="169"/>
        <end position="191"/>
    </location>
</feature>
<feature type="zinc finger region" description="C2H2-type 3" evidence="1">
    <location>
        <begin position="197"/>
        <end position="219"/>
    </location>
</feature>
<feature type="zinc finger region" description="C2H2-type 4" evidence="1">
    <location>
        <begin position="225"/>
        <end position="247"/>
    </location>
</feature>
<feature type="zinc finger region" description="C2H2-type 5" evidence="1">
    <location>
        <begin position="253"/>
        <end position="275"/>
    </location>
</feature>
<feature type="zinc finger region" description="C2H2-type 6" evidence="1">
    <location>
        <begin position="281"/>
        <end position="303"/>
    </location>
</feature>
<feature type="zinc finger region" description="C2H2-type 7" evidence="1">
    <location>
        <begin position="309"/>
        <end position="331"/>
    </location>
</feature>
<feature type="zinc finger region" description="C2H2-type 8" evidence="1">
    <location>
        <begin position="337"/>
        <end position="359"/>
    </location>
</feature>
<feature type="zinc finger region" description="C2H2-type 9" evidence="1">
    <location>
        <begin position="365"/>
        <end position="387"/>
    </location>
</feature>
<feature type="zinc finger region" description="C2H2-type 10" evidence="1">
    <location>
        <begin position="393"/>
        <end position="415"/>
    </location>
</feature>
<feature type="zinc finger region" description="C2H2-type 11" evidence="1">
    <location>
        <begin position="421"/>
        <end position="443"/>
    </location>
</feature>
<feature type="zinc finger region" description="C2H2-type 12" evidence="1">
    <location>
        <begin position="449"/>
        <end position="471"/>
    </location>
</feature>
<feature type="zinc finger region" description="C2H2-type 13; degenerate" evidence="1">
    <location>
        <begin position="477"/>
        <end position="498"/>
    </location>
</feature>
<feature type="zinc finger region" description="C2H2-type 14" evidence="1">
    <location>
        <begin position="504"/>
        <end position="526"/>
    </location>
</feature>
<feature type="zinc finger region" description="C2H2-type 15" evidence="1">
    <location>
        <begin position="532"/>
        <end position="554"/>
    </location>
</feature>
<feature type="zinc finger region" description="C2H2-type 16" evidence="1">
    <location>
        <begin position="560"/>
        <end position="582"/>
    </location>
</feature>
<feature type="zinc finger region" description="C2H2-type 17" evidence="1">
    <location>
        <begin position="588"/>
        <end position="610"/>
    </location>
</feature>
<feature type="zinc finger region" description="C2H2-type 18" evidence="1">
    <location>
        <begin position="616"/>
        <end position="638"/>
    </location>
</feature>
<feature type="zinc finger region" description="C2H2-type 19" evidence="1">
    <location>
        <begin position="649"/>
        <end position="671"/>
    </location>
</feature>
<feature type="sequence variant" id="VAR_061947" description="In dbSNP:rs28599549.">
    <original>K</original>
    <variation>I</variation>
    <location>
        <position position="111"/>
    </location>
</feature>
<feature type="sequence variant" id="VAR_059917" description="In dbSNP:rs4239550.">
    <original>K</original>
    <variation>N</variation>
    <location>
        <position position="111"/>
    </location>
</feature>
<feature type="sequence variant" id="VAR_061948" description="In dbSNP:rs35699767.">
    <original>Q</original>
    <variation>H</variation>
    <location>
        <position position="397"/>
    </location>
</feature>
<feature type="sequence variant" id="VAR_059918" description="In dbSNP:rs10422063." evidence="3 4">
    <original>C</original>
    <variation>F</variation>
    <location>
        <position position="485"/>
    </location>
</feature>
<feature type="sequence variant" id="VAR_057420" description="In dbSNP:rs7256321.">
    <original>P</original>
    <variation>Q</variation>
    <location>
        <position position="591"/>
    </location>
</feature>
<feature type="sequence conflict" description="In Ref. 1; BAA75543 and 3; AAH32753." evidence="5" ref="1 3">
    <original>V</original>
    <variation>I</variation>
    <location>
        <position position="72"/>
    </location>
</feature>
<feature type="sequence conflict" description="In Ref. 1; BAA75543 and 3; AAH32753." evidence="5" ref="1 3">
    <original>K</original>
    <variation>T</variation>
    <location>
        <position position="480"/>
    </location>
</feature>
<sequence>MASVALEDVAVNFTREEWALLGPCQKNLYKDVMQETIRNLDCVVMKWKDQNIEDQYRYPRKNLRCRMLERFVESKDGTQCGETSSQIQDSIVTKNTLPGVGPCESSMRGEKVMGHSSLNCYIRVGAGHKPHEYHECGEKPDTHKQRGKAFSYHNSFQTHERLHTGKKPYDCKECGKSFSSLGNLQRHMAVQRGDGPYKCKLCGKAFFWPSLLHMHERTHTGEKPYECKQCSKAFSFYSSYLRHERTHTGEKPYECKQCSKAFPFYSSYLRHERTHTGEKPYKCKQCSKAFPDSSSCLIHERTHTGEKPYTCKQCGKAFSVSGSLQRHETTHSAEKPYACQQCGKAFHHLGSFQRHMIRHTGNGPHKCKICGKGFDCPSSLQSHERTHTGEKPYECKQCGKALSHRSSFRSHMIMHTGDGPHKCKVCGKAFVYPSVFQRHERTHTAEKPYKCKQCGKAYRISSSLRRHETTHTGEKPYKCKLGKACIDFCSFQNHKTTHTGEKPYECKECGKAFSRFRYLSRHKRTHTGEKPYECKTCRKAFGHYDNLKVHERIHSGEKPYECKECGKAFSWLTCFLRHERIHMREKSYECPQCGKAFTHSRFLQGHEKTHTGENPYECKECGKAFASLSSLHRHKKTHWKKTHTGENPYECKECGKAFASLSSLHRHKKTH</sequence>
<proteinExistence type="evidence at protein level"/>
<comment type="function">
    <text>May be involved in transcriptional regulation.</text>
</comment>
<comment type="subcellular location">
    <subcellularLocation>
        <location evidence="5">Nucleus</location>
    </subcellularLocation>
</comment>
<comment type="induction">
    <text>Induced following exposure to ionizing radiation.</text>
</comment>
<comment type="similarity">
    <text evidence="5">Belongs to the krueppel C2H2-type zinc-finger protein family.</text>
</comment>
<dbReference type="EMBL" id="AB011414">
    <property type="protein sequence ID" value="BAA75543.1"/>
    <property type="molecule type" value="mRNA"/>
</dbReference>
<dbReference type="EMBL" id="AC008758">
    <property type="status" value="NOT_ANNOTATED_CDS"/>
    <property type="molecule type" value="Genomic_DNA"/>
</dbReference>
<dbReference type="EMBL" id="BC032753">
    <property type="protein sequence ID" value="AAH32753.1"/>
    <property type="molecule type" value="mRNA"/>
</dbReference>
<dbReference type="CCDS" id="CCDS32918.1"/>
<dbReference type="PIR" id="JE0288">
    <property type="entry name" value="JE0288"/>
</dbReference>
<dbReference type="RefSeq" id="NP_005806.3">
    <property type="nucleotide sequence ID" value="NM_005815.5"/>
</dbReference>
<dbReference type="SMR" id="Q9Y2A4"/>
<dbReference type="BioGRID" id="115518">
    <property type="interactions" value="4"/>
</dbReference>
<dbReference type="FunCoup" id="Q9Y2A4">
    <property type="interactions" value="550"/>
</dbReference>
<dbReference type="IntAct" id="Q9Y2A4">
    <property type="interactions" value="2"/>
</dbReference>
<dbReference type="STRING" id="9606.ENSP00000301547"/>
<dbReference type="iPTMnet" id="Q9Y2A4"/>
<dbReference type="PhosphoSitePlus" id="Q9Y2A4"/>
<dbReference type="BioMuta" id="ZNF443"/>
<dbReference type="DMDM" id="296453041"/>
<dbReference type="jPOST" id="Q9Y2A4"/>
<dbReference type="MassIVE" id="Q9Y2A4"/>
<dbReference type="PaxDb" id="9606-ENSP00000301547"/>
<dbReference type="PeptideAtlas" id="Q9Y2A4"/>
<dbReference type="ProteomicsDB" id="85711"/>
<dbReference type="Pumba" id="Q9Y2A4"/>
<dbReference type="Antibodypedia" id="842">
    <property type="antibodies" value="78 antibodies from 18 providers"/>
</dbReference>
<dbReference type="DNASU" id="10224"/>
<dbReference type="Ensembl" id="ENST00000301547.10">
    <property type="protein sequence ID" value="ENSP00000301547.5"/>
    <property type="gene ID" value="ENSG00000180855.16"/>
</dbReference>
<dbReference type="GeneID" id="10224"/>
<dbReference type="KEGG" id="hsa:10224"/>
<dbReference type="MANE-Select" id="ENST00000301547.10">
    <property type="protein sequence ID" value="ENSP00000301547.5"/>
    <property type="RefSeq nucleotide sequence ID" value="NM_005815.5"/>
    <property type="RefSeq protein sequence ID" value="NP_005806.3"/>
</dbReference>
<dbReference type="UCSC" id="uc002mtu.4">
    <property type="organism name" value="human"/>
</dbReference>
<dbReference type="AGR" id="HGNC:20878"/>
<dbReference type="CTD" id="10224"/>
<dbReference type="DisGeNET" id="10224"/>
<dbReference type="GeneCards" id="ZNF443"/>
<dbReference type="HGNC" id="HGNC:20878">
    <property type="gene designation" value="ZNF443"/>
</dbReference>
<dbReference type="HPA" id="ENSG00000180855">
    <property type="expression patterns" value="Low tissue specificity"/>
</dbReference>
<dbReference type="MIM" id="606697">
    <property type="type" value="gene"/>
</dbReference>
<dbReference type="neXtProt" id="NX_Q9Y2A4"/>
<dbReference type="OpenTargets" id="ENSG00000180855"/>
<dbReference type="PharmGKB" id="PA134968382"/>
<dbReference type="VEuPathDB" id="HostDB:ENSG00000180855"/>
<dbReference type="eggNOG" id="KOG1721">
    <property type="taxonomic scope" value="Eukaryota"/>
</dbReference>
<dbReference type="GeneTree" id="ENSGT00950000182755"/>
<dbReference type="HOGENOM" id="CLU_002678_44_3_1"/>
<dbReference type="InParanoid" id="Q9Y2A4"/>
<dbReference type="OMA" id="PHEYHEY"/>
<dbReference type="OrthoDB" id="9547406at2759"/>
<dbReference type="PAN-GO" id="Q9Y2A4">
    <property type="GO annotations" value="4 GO annotations based on evolutionary models"/>
</dbReference>
<dbReference type="PhylomeDB" id="Q9Y2A4"/>
<dbReference type="TreeFam" id="TF343410"/>
<dbReference type="PathwayCommons" id="Q9Y2A4"/>
<dbReference type="Reactome" id="R-HSA-212436">
    <property type="pathway name" value="Generic Transcription Pathway"/>
</dbReference>
<dbReference type="SignaLink" id="Q9Y2A4"/>
<dbReference type="BioGRID-ORCS" id="10224">
    <property type="hits" value="33 hits in 1125 CRISPR screens"/>
</dbReference>
<dbReference type="GenomeRNAi" id="10224"/>
<dbReference type="Pharos" id="Q9Y2A4">
    <property type="development level" value="Tbio"/>
</dbReference>
<dbReference type="PRO" id="PR:Q9Y2A4"/>
<dbReference type="Proteomes" id="UP000005640">
    <property type="component" value="Chromosome 19"/>
</dbReference>
<dbReference type="RNAct" id="Q9Y2A4">
    <property type="molecule type" value="protein"/>
</dbReference>
<dbReference type="Bgee" id="ENSG00000180855">
    <property type="expression patterns" value="Expressed in male germ line stem cell (sensu Vertebrata) in testis and 97 other cell types or tissues"/>
</dbReference>
<dbReference type="ExpressionAtlas" id="Q9Y2A4">
    <property type="expression patterns" value="baseline and differential"/>
</dbReference>
<dbReference type="GO" id="GO:0005634">
    <property type="term" value="C:nucleus"/>
    <property type="evidence" value="ECO:0000318"/>
    <property type="project" value="GO_Central"/>
</dbReference>
<dbReference type="GO" id="GO:0000981">
    <property type="term" value="F:DNA-binding transcription factor activity, RNA polymerase II-specific"/>
    <property type="evidence" value="ECO:0000318"/>
    <property type="project" value="GO_Central"/>
</dbReference>
<dbReference type="GO" id="GO:0000977">
    <property type="term" value="F:RNA polymerase II transcription regulatory region sequence-specific DNA binding"/>
    <property type="evidence" value="ECO:0000318"/>
    <property type="project" value="GO_Central"/>
</dbReference>
<dbReference type="GO" id="GO:0008270">
    <property type="term" value="F:zinc ion binding"/>
    <property type="evidence" value="ECO:0007669"/>
    <property type="project" value="UniProtKB-KW"/>
</dbReference>
<dbReference type="GO" id="GO:0006915">
    <property type="term" value="P:apoptotic process"/>
    <property type="evidence" value="ECO:0000304"/>
    <property type="project" value="ProtInc"/>
</dbReference>
<dbReference type="GO" id="GO:0006357">
    <property type="term" value="P:regulation of transcription by RNA polymerase II"/>
    <property type="evidence" value="ECO:0000318"/>
    <property type="project" value="GO_Central"/>
</dbReference>
<dbReference type="CDD" id="cd07765">
    <property type="entry name" value="KRAB_A-box"/>
    <property type="match status" value="1"/>
</dbReference>
<dbReference type="FunFam" id="3.30.160.60:FF:003733">
    <property type="match status" value="1"/>
</dbReference>
<dbReference type="FunFam" id="3.30.160.60:FF:000838">
    <property type="entry name" value="Zinc finger protein 14"/>
    <property type="match status" value="2"/>
</dbReference>
<dbReference type="FunFam" id="3.30.160.60:FF:000193">
    <property type="entry name" value="Zinc finger protein 300"/>
    <property type="match status" value="2"/>
</dbReference>
<dbReference type="FunFam" id="3.30.160.60:FF:000184">
    <property type="entry name" value="Zinc finger protein 333"/>
    <property type="match status" value="1"/>
</dbReference>
<dbReference type="FunFam" id="3.30.160.60:FF:001433">
    <property type="entry name" value="Zinc finger protein 44"/>
    <property type="match status" value="1"/>
</dbReference>
<dbReference type="FunFam" id="3.30.160.60:FF:003123">
    <property type="entry name" value="Zinc finger protein 443"/>
    <property type="match status" value="1"/>
</dbReference>
<dbReference type="FunFam" id="3.30.160.60:FF:002254">
    <property type="entry name" value="Zinc finger protein 540"/>
    <property type="match status" value="1"/>
</dbReference>
<dbReference type="FunFam" id="3.30.160.60:FF:001432">
    <property type="entry name" value="Zinc finger protein 571"/>
    <property type="match status" value="1"/>
</dbReference>
<dbReference type="FunFam" id="3.30.160.60:FF:000350">
    <property type="entry name" value="Zinc finger protein 699"/>
    <property type="match status" value="1"/>
</dbReference>
<dbReference type="FunFam" id="3.30.160.60:FF:000564">
    <property type="entry name" value="zinc finger protein 699"/>
    <property type="match status" value="2"/>
</dbReference>
<dbReference type="FunFam" id="3.30.160.60:FF:000710">
    <property type="entry name" value="Zinc finger protein 768"/>
    <property type="match status" value="2"/>
</dbReference>
<dbReference type="FunFam" id="3.30.160.60:FF:000493">
    <property type="entry name" value="Zinc finger protein 805"/>
    <property type="match status" value="1"/>
</dbReference>
<dbReference type="FunFam" id="3.30.160.60:FF:001933">
    <property type="entry name" value="Zinc finger protein 870"/>
    <property type="match status" value="1"/>
</dbReference>
<dbReference type="FunFam" id="3.30.160.60:FF:002179">
    <property type="entry name" value="Zinc finger protein 961"/>
    <property type="match status" value="1"/>
</dbReference>
<dbReference type="Gene3D" id="6.10.140.140">
    <property type="match status" value="1"/>
</dbReference>
<dbReference type="Gene3D" id="3.30.160.60">
    <property type="entry name" value="Classic Zinc Finger"/>
    <property type="match status" value="19"/>
</dbReference>
<dbReference type="InterPro" id="IPR050589">
    <property type="entry name" value="Ikaros_C2H2-ZF"/>
</dbReference>
<dbReference type="InterPro" id="IPR001909">
    <property type="entry name" value="KRAB"/>
</dbReference>
<dbReference type="InterPro" id="IPR036051">
    <property type="entry name" value="KRAB_dom_sf"/>
</dbReference>
<dbReference type="InterPro" id="IPR036236">
    <property type="entry name" value="Znf_C2H2_sf"/>
</dbReference>
<dbReference type="InterPro" id="IPR013087">
    <property type="entry name" value="Znf_C2H2_type"/>
</dbReference>
<dbReference type="PANTHER" id="PTHR24404">
    <property type="entry name" value="ZINC FINGER PROTEIN"/>
    <property type="match status" value="1"/>
</dbReference>
<dbReference type="PANTHER" id="PTHR24404:SF10">
    <property type="entry name" value="ZINC FINGER PROTEIN 564"/>
    <property type="match status" value="1"/>
</dbReference>
<dbReference type="Pfam" id="PF01352">
    <property type="entry name" value="KRAB"/>
    <property type="match status" value="1"/>
</dbReference>
<dbReference type="Pfam" id="PF00096">
    <property type="entry name" value="zf-C2H2"/>
    <property type="match status" value="12"/>
</dbReference>
<dbReference type="Pfam" id="PF13894">
    <property type="entry name" value="zf-C2H2_4"/>
    <property type="match status" value="1"/>
</dbReference>
<dbReference type="Pfam" id="PF13912">
    <property type="entry name" value="zf-C2H2_6"/>
    <property type="match status" value="1"/>
</dbReference>
<dbReference type="SMART" id="SM00349">
    <property type="entry name" value="KRAB"/>
    <property type="match status" value="1"/>
</dbReference>
<dbReference type="SMART" id="SM00355">
    <property type="entry name" value="ZnF_C2H2"/>
    <property type="match status" value="19"/>
</dbReference>
<dbReference type="SUPFAM" id="SSF57667">
    <property type="entry name" value="beta-beta-alpha zinc fingers"/>
    <property type="match status" value="10"/>
</dbReference>
<dbReference type="SUPFAM" id="SSF109640">
    <property type="entry name" value="KRAB domain (Kruppel-associated box)"/>
    <property type="match status" value="1"/>
</dbReference>
<dbReference type="PROSITE" id="PS50805">
    <property type="entry name" value="KRAB"/>
    <property type="match status" value="1"/>
</dbReference>
<dbReference type="PROSITE" id="PS00028">
    <property type="entry name" value="ZINC_FINGER_C2H2_1"/>
    <property type="match status" value="16"/>
</dbReference>
<dbReference type="PROSITE" id="PS50157">
    <property type="entry name" value="ZINC_FINGER_C2H2_2"/>
    <property type="match status" value="18"/>
</dbReference>
<gene>
    <name type="primary">ZNF443</name>
</gene>
<organism>
    <name type="scientific">Homo sapiens</name>
    <name type="common">Human</name>
    <dbReference type="NCBI Taxonomy" id="9606"/>
    <lineage>
        <taxon>Eukaryota</taxon>
        <taxon>Metazoa</taxon>
        <taxon>Chordata</taxon>
        <taxon>Craniata</taxon>
        <taxon>Vertebrata</taxon>
        <taxon>Euteleostomi</taxon>
        <taxon>Mammalia</taxon>
        <taxon>Eutheria</taxon>
        <taxon>Euarchontoglires</taxon>
        <taxon>Primates</taxon>
        <taxon>Haplorrhini</taxon>
        <taxon>Catarrhini</taxon>
        <taxon>Hominidae</taxon>
        <taxon>Homo</taxon>
    </lineage>
</organism>